<feature type="chain" id="PRO_1000006664" description="Aspartate--tRNA ligase">
    <location>
        <begin position="1"/>
        <end position="593"/>
    </location>
</feature>
<feature type="region of interest" description="Aspartate" evidence="1">
    <location>
        <begin position="204"/>
        <end position="207"/>
    </location>
</feature>
<feature type="binding site" evidence="1">
    <location>
        <position position="180"/>
    </location>
    <ligand>
        <name>L-aspartate</name>
        <dbReference type="ChEBI" id="CHEBI:29991"/>
    </ligand>
</feature>
<feature type="binding site" evidence="1">
    <location>
        <begin position="226"/>
        <end position="228"/>
    </location>
    <ligand>
        <name>ATP</name>
        <dbReference type="ChEBI" id="CHEBI:30616"/>
    </ligand>
</feature>
<feature type="binding site" evidence="1">
    <location>
        <position position="226"/>
    </location>
    <ligand>
        <name>L-aspartate</name>
        <dbReference type="ChEBI" id="CHEBI:29991"/>
    </ligand>
</feature>
<feature type="binding site" evidence="1">
    <location>
        <position position="235"/>
    </location>
    <ligand>
        <name>ATP</name>
        <dbReference type="ChEBI" id="CHEBI:30616"/>
    </ligand>
</feature>
<feature type="binding site" evidence="1">
    <location>
        <position position="454"/>
    </location>
    <ligand>
        <name>L-aspartate</name>
        <dbReference type="ChEBI" id="CHEBI:29991"/>
    </ligand>
</feature>
<feature type="binding site" evidence="1">
    <location>
        <position position="488"/>
    </location>
    <ligand>
        <name>ATP</name>
        <dbReference type="ChEBI" id="CHEBI:30616"/>
    </ligand>
</feature>
<feature type="binding site" evidence="1">
    <location>
        <position position="495"/>
    </location>
    <ligand>
        <name>L-aspartate</name>
        <dbReference type="ChEBI" id="CHEBI:29991"/>
    </ligand>
</feature>
<feature type="binding site" evidence="1">
    <location>
        <begin position="540"/>
        <end position="543"/>
    </location>
    <ligand>
        <name>ATP</name>
        <dbReference type="ChEBI" id="CHEBI:30616"/>
    </ligand>
</feature>
<evidence type="ECO:0000255" key="1">
    <source>
        <dbReference type="HAMAP-Rule" id="MF_00044"/>
    </source>
</evidence>
<accession>A0PZX0</accession>
<keyword id="KW-0030">Aminoacyl-tRNA synthetase</keyword>
<keyword id="KW-0067">ATP-binding</keyword>
<keyword id="KW-0963">Cytoplasm</keyword>
<keyword id="KW-0436">Ligase</keyword>
<keyword id="KW-0547">Nucleotide-binding</keyword>
<keyword id="KW-0648">Protein biosynthesis</keyword>
<keyword id="KW-1185">Reference proteome</keyword>
<dbReference type="EC" id="6.1.1.12" evidence="1"/>
<dbReference type="EMBL" id="CP000382">
    <property type="protein sequence ID" value="ABK60762.1"/>
    <property type="molecule type" value="Genomic_DNA"/>
</dbReference>
<dbReference type="RefSeq" id="WP_011721926.1">
    <property type="nucleotide sequence ID" value="NC_008593.1"/>
</dbReference>
<dbReference type="SMR" id="A0PZX0"/>
<dbReference type="STRING" id="386415.NT01CX_1849"/>
<dbReference type="KEGG" id="cno:NT01CX_1849"/>
<dbReference type="PATRIC" id="fig|386415.7.peg.951"/>
<dbReference type="eggNOG" id="COG0173">
    <property type="taxonomic scope" value="Bacteria"/>
</dbReference>
<dbReference type="HOGENOM" id="CLU_014330_3_2_9"/>
<dbReference type="Proteomes" id="UP000008220">
    <property type="component" value="Chromosome"/>
</dbReference>
<dbReference type="GO" id="GO:0005737">
    <property type="term" value="C:cytoplasm"/>
    <property type="evidence" value="ECO:0007669"/>
    <property type="project" value="UniProtKB-SubCell"/>
</dbReference>
<dbReference type="GO" id="GO:0004815">
    <property type="term" value="F:aspartate-tRNA ligase activity"/>
    <property type="evidence" value="ECO:0007669"/>
    <property type="project" value="UniProtKB-UniRule"/>
</dbReference>
<dbReference type="GO" id="GO:0005524">
    <property type="term" value="F:ATP binding"/>
    <property type="evidence" value="ECO:0007669"/>
    <property type="project" value="UniProtKB-UniRule"/>
</dbReference>
<dbReference type="GO" id="GO:0140096">
    <property type="term" value="F:catalytic activity, acting on a protein"/>
    <property type="evidence" value="ECO:0007669"/>
    <property type="project" value="UniProtKB-ARBA"/>
</dbReference>
<dbReference type="GO" id="GO:0003676">
    <property type="term" value="F:nucleic acid binding"/>
    <property type="evidence" value="ECO:0007669"/>
    <property type="project" value="InterPro"/>
</dbReference>
<dbReference type="GO" id="GO:0016740">
    <property type="term" value="F:transferase activity"/>
    <property type="evidence" value="ECO:0007669"/>
    <property type="project" value="UniProtKB-ARBA"/>
</dbReference>
<dbReference type="GO" id="GO:0006422">
    <property type="term" value="P:aspartyl-tRNA aminoacylation"/>
    <property type="evidence" value="ECO:0007669"/>
    <property type="project" value="UniProtKB-UniRule"/>
</dbReference>
<dbReference type="CDD" id="cd00777">
    <property type="entry name" value="AspRS_core"/>
    <property type="match status" value="1"/>
</dbReference>
<dbReference type="CDD" id="cd04317">
    <property type="entry name" value="EcAspRS_like_N"/>
    <property type="match status" value="1"/>
</dbReference>
<dbReference type="Gene3D" id="3.30.930.10">
    <property type="entry name" value="Bira Bifunctional Protein, Domain 2"/>
    <property type="match status" value="1"/>
</dbReference>
<dbReference type="Gene3D" id="3.30.1360.30">
    <property type="entry name" value="GAD-like domain"/>
    <property type="match status" value="1"/>
</dbReference>
<dbReference type="Gene3D" id="2.40.50.140">
    <property type="entry name" value="Nucleic acid-binding proteins"/>
    <property type="match status" value="1"/>
</dbReference>
<dbReference type="HAMAP" id="MF_00044">
    <property type="entry name" value="Asp_tRNA_synth_type1"/>
    <property type="match status" value="1"/>
</dbReference>
<dbReference type="InterPro" id="IPR004364">
    <property type="entry name" value="Aa-tRNA-synt_II"/>
</dbReference>
<dbReference type="InterPro" id="IPR006195">
    <property type="entry name" value="aa-tRNA-synth_II"/>
</dbReference>
<dbReference type="InterPro" id="IPR045864">
    <property type="entry name" value="aa-tRNA-synth_II/BPL/LPL"/>
</dbReference>
<dbReference type="InterPro" id="IPR004524">
    <property type="entry name" value="Asp-tRNA-ligase_1"/>
</dbReference>
<dbReference type="InterPro" id="IPR047089">
    <property type="entry name" value="Asp-tRNA-ligase_1_N"/>
</dbReference>
<dbReference type="InterPro" id="IPR002312">
    <property type="entry name" value="Asp/Asn-tRNA-synth_IIb"/>
</dbReference>
<dbReference type="InterPro" id="IPR047090">
    <property type="entry name" value="AspRS_core"/>
</dbReference>
<dbReference type="InterPro" id="IPR004115">
    <property type="entry name" value="GAD-like_sf"/>
</dbReference>
<dbReference type="InterPro" id="IPR029351">
    <property type="entry name" value="GAD_dom"/>
</dbReference>
<dbReference type="InterPro" id="IPR012340">
    <property type="entry name" value="NA-bd_OB-fold"/>
</dbReference>
<dbReference type="InterPro" id="IPR004365">
    <property type="entry name" value="NA-bd_OB_tRNA"/>
</dbReference>
<dbReference type="NCBIfam" id="TIGR00459">
    <property type="entry name" value="aspS_bact"/>
    <property type="match status" value="1"/>
</dbReference>
<dbReference type="NCBIfam" id="NF001750">
    <property type="entry name" value="PRK00476.1"/>
    <property type="match status" value="1"/>
</dbReference>
<dbReference type="PANTHER" id="PTHR22594:SF5">
    <property type="entry name" value="ASPARTATE--TRNA LIGASE, MITOCHONDRIAL"/>
    <property type="match status" value="1"/>
</dbReference>
<dbReference type="PANTHER" id="PTHR22594">
    <property type="entry name" value="ASPARTYL/LYSYL-TRNA SYNTHETASE"/>
    <property type="match status" value="1"/>
</dbReference>
<dbReference type="Pfam" id="PF02938">
    <property type="entry name" value="GAD"/>
    <property type="match status" value="1"/>
</dbReference>
<dbReference type="Pfam" id="PF00152">
    <property type="entry name" value="tRNA-synt_2"/>
    <property type="match status" value="1"/>
</dbReference>
<dbReference type="Pfam" id="PF01336">
    <property type="entry name" value="tRNA_anti-codon"/>
    <property type="match status" value="1"/>
</dbReference>
<dbReference type="PRINTS" id="PR01042">
    <property type="entry name" value="TRNASYNTHASP"/>
</dbReference>
<dbReference type="SUPFAM" id="SSF55681">
    <property type="entry name" value="Class II aaRS and biotin synthetases"/>
    <property type="match status" value="1"/>
</dbReference>
<dbReference type="SUPFAM" id="SSF55261">
    <property type="entry name" value="GAD domain-like"/>
    <property type="match status" value="1"/>
</dbReference>
<dbReference type="SUPFAM" id="SSF50249">
    <property type="entry name" value="Nucleic acid-binding proteins"/>
    <property type="match status" value="1"/>
</dbReference>
<dbReference type="PROSITE" id="PS50862">
    <property type="entry name" value="AA_TRNA_LIGASE_II"/>
    <property type="match status" value="1"/>
</dbReference>
<comment type="function">
    <text evidence="1">Catalyzes the attachment of L-aspartate to tRNA(Asp) in a two-step reaction: L-aspartate is first activated by ATP to form Asp-AMP and then transferred to the acceptor end of tRNA(Asp).</text>
</comment>
<comment type="catalytic activity">
    <reaction evidence="1">
        <text>tRNA(Asp) + L-aspartate + ATP = L-aspartyl-tRNA(Asp) + AMP + diphosphate</text>
        <dbReference type="Rhea" id="RHEA:19649"/>
        <dbReference type="Rhea" id="RHEA-COMP:9660"/>
        <dbReference type="Rhea" id="RHEA-COMP:9678"/>
        <dbReference type="ChEBI" id="CHEBI:29991"/>
        <dbReference type="ChEBI" id="CHEBI:30616"/>
        <dbReference type="ChEBI" id="CHEBI:33019"/>
        <dbReference type="ChEBI" id="CHEBI:78442"/>
        <dbReference type="ChEBI" id="CHEBI:78516"/>
        <dbReference type="ChEBI" id="CHEBI:456215"/>
        <dbReference type="EC" id="6.1.1.12"/>
    </reaction>
</comment>
<comment type="subunit">
    <text evidence="1">Homodimer.</text>
</comment>
<comment type="subcellular location">
    <subcellularLocation>
        <location evidence="1">Cytoplasm</location>
    </subcellularLocation>
</comment>
<comment type="similarity">
    <text evidence="1">Belongs to the class-II aminoacyl-tRNA synthetase family. Type 1 subfamily.</text>
</comment>
<proteinExistence type="inferred from homology"/>
<gene>
    <name evidence="1" type="primary">aspS</name>
    <name type="ordered locus">NT01CX_1849</name>
</gene>
<reference key="1">
    <citation type="journal article" date="2006" name="Nat. Biotechnol.">
        <title>The genome and transcriptomes of the anti-tumor agent Clostridium novyi-NT.</title>
        <authorList>
            <person name="Bettegowda C."/>
            <person name="Huang X."/>
            <person name="Lin J."/>
            <person name="Cheong I."/>
            <person name="Kohli M."/>
            <person name="Szabo S.A."/>
            <person name="Zhang X."/>
            <person name="Diaz L.A. Jr."/>
            <person name="Velculescu V.E."/>
            <person name="Parmigiani G."/>
            <person name="Kinzler K.W."/>
            <person name="Vogelstein B."/>
            <person name="Zhou S."/>
        </authorList>
    </citation>
    <scope>NUCLEOTIDE SEQUENCE [LARGE SCALE GENOMIC DNA]</scope>
    <source>
        <strain>NT</strain>
    </source>
</reference>
<protein>
    <recommendedName>
        <fullName evidence="1">Aspartate--tRNA ligase</fullName>
        <ecNumber evidence="1">6.1.1.12</ecNumber>
    </recommendedName>
    <alternativeName>
        <fullName evidence="1">Aspartyl-tRNA synthetase</fullName>
        <shortName evidence="1">AspRS</shortName>
    </alternativeName>
</protein>
<name>SYD_CLONN</name>
<sequence>MAESLNGLKRTVMCGELRESHIGQKHVVMGWVQRKRNLGGLVFVDLRDREGILQVVFGEEINKEAFEKADLVKPEYCIAVEGELVRRESPNEAMPTGMVELKGQNIKILSESETPPIYIKEDLDTDEAVRLKYRYLDLRRPDMQKIFKVRHKTAKVIRDFLDENGFLEMETPMLTKSTPEGARDYLVPSRNYPGMFYALPQSPQLFKQLLMVSGYDKYFQITKCFRDEDLRANRQPEFTQVDMELSFVDMEDVIALNEKLIQKVFKEVANVDVQLPIQRITYKEAMDKYGSDKPDLRFGMEINDITDAVKDVDFKVFKDAIENGGSVRAIKAPNCATMGRKQIDKLGEFVKTYKAKGLAWIAYKEDEIKSPIAKFLGEEGINKVIESLDAKVGDLILIVADKDSVVLQSLGALRLEMAKRLEILKDNKEFRFAWVTEFPLLSYNEEEDRYQAEHHPFTMPMDEDIEYLESDPGRVRAKAYDIVLNGEELGGGSIRIHDTKLQEKMFNVLGFTSESAWERFGFLLEAFKFGPPPHGGLAYGFDRMIMFLAGTENIKDVIAFPKNQNAYCPLTEAPNVVDEKQLGELGIGVQKQK</sequence>
<organism>
    <name type="scientific">Clostridium novyi (strain NT)</name>
    <dbReference type="NCBI Taxonomy" id="386415"/>
    <lineage>
        <taxon>Bacteria</taxon>
        <taxon>Bacillati</taxon>
        <taxon>Bacillota</taxon>
        <taxon>Clostridia</taxon>
        <taxon>Eubacteriales</taxon>
        <taxon>Clostridiaceae</taxon>
        <taxon>Clostridium</taxon>
    </lineage>
</organism>